<dbReference type="EMBL" id="AC001229">
    <property type="protein sequence ID" value="AAB60915.1"/>
    <property type="status" value="ALT_SEQ"/>
    <property type="molecule type" value="Genomic_DNA"/>
</dbReference>
<dbReference type="EMBL" id="AC007234">
    <property type="protein sequence ID" value="AAF23844.1"/>
    <property type="status" value="ALT_SEQ"/>
    <property type="molecule type" value="Genomic_DNA"/>
</dbReference>
<dbReference type="EMBL" id="CP002684">
    <property type="protein sequence ID" value="AEE34408.1"/>
    <property type="molecule type" value="Genomic_DNA"/>
</dbReference>
<dbReference type="EMBL" id="BT002797">
    <property type="protein sequence ID" value="AAO22622.1"/>
    <property type="molecule type" value="mRNA"/>
</dbReference>
<dbReference type="PIR" id="E96681">
    <property type="entry name" value="E96681"/>
</dbReference>
<dbReference type="RefSeq" id="NP_564859.2">
    <property type="nucleotide sequence ID" value="NM_105239.6"/>
</dbReference>
<dbReference type="SMR" id="Q9SHY8"/>
<dbReference type="FunCoup" id="Q9SHY8">
    <property type="interactions" value="4201"/>
</dbReference>
<dbReference type="STRING" id="3702.Q9SHY8"/>
<dbReference type="iPTMnet" id="Q9SHY8"/>
<dbReference type="PaxDb" id="3702-AT1G65660.1"/>
<dbReference type="ProteomicsDB" id="232562"/>
<dbReference type="EnsemblPlants" id="AT1G65660.1">
    <property type="protein sequence ID" value="AT1G65660.1"/>
    <property type="gene ID" value="AT1G65660"/>
</dbReference>
<dbReference type="GeneID" id="842877"/>
<dbReference type="Gramene" id="AT1G65660.1">
    <property type="protein sequence ID" value="AT1G65660.1"/>
    <property type="gene ID" value="AT1G65660"/>
</dbReference>
<dbReference type="KEGG" id="ath:AT1G65660"/>
<dbReference type="Araport" id="AT1G65660"/>
<dbReference type="TAIR" id="AT1G65660">
    <property type="gene designation" value="SMP1"/>
</dbReference>
<dbReference type="eggNOG" id="KOG2560">
    <property type="taxonomic scope" value="Eukaryota"/>
</dbReference>
<dbReference type="HOGENOM" id="CLU_019317_3_1_1"/>
<dbReference type="InParanoid" id="Q9SHY8"/>
<dbReference type="OMA" id="KYAWESQ"/>
<dbReference type="OrthoDB" id="249612at2759"/>
<dbReference type="PhylomeDB" id="Q9SHY8"/>
<dbReference type="PRO" id="PR:Q9SHY8"/>
<dbReference type="Proteomes" id="UP000006548">
    <property type="component" value="Chromosome 1"/>
</dbReference>
<dbReference type="ExpressionAtlas" id="Q9SHY8">
    <property type="expression patterns" value="baseline and differential"/>
</dbReference>
<dbReference type="GO" id="GO:0005681">
    <property type="term" value="C:spliceosomal complex"/>
    <property type="evidence" value="ECO:0007669"/>
    <property type="project" value="UniProtKB-KW"/>
</dbReference>
<dbReference type="GO" id="GO:0030628">
    <property type="term" value="F:pre-mRNA 3'-splice site binding"/>
    <property type="evidence" value="ECO:0007669"/>
    <property type="project" value="InterPro"/>
</dbReference>
<dbReference type="GO" id="GO:0003727">
    <property type="term" value="F:single-stranded RNA binding"/>
    <property type="evidence" value="ECO:0000304"/>
    <property type="project" value="TAIR"/>
</dbReference>
<dbReference type="GO" id="GO:0008270">
    <property type="term" value="F:zinc ion binding"/>
    <property type="evidence" value="ECO:0007669"/>
    <property type="project" value="UniProtKB-KW"/>
</dbReference>
<dbReference type="GO" id="GO:0000398">
    <property type="term" value="P:mRNA splicing, via spliceosome"/>
    <property type="evidence" value="ECO:0007669"/>
    <property type="project" value="InterPro"/>
</dbReference>
<dbReference type="GO" id="GO:0008284">
    <property type="term" value="P:positive regulation of cell population proliferation"/>
    <property type="evidence" value="ECO:0000315"/>
    <property type="project" value="TAIR"/>
</dbReference>
<dbReference type="GO" id="GO:0008380">
    <property type="term" value="P:RNA splicing"/>
    <property type="evidence" value="ECO:0000304"/>
    <property type="project" value="TAIR"/>
</dbReference>
<dbReference type="InterPro" id="IPR021715">
    <property type="entry name" value="Slu7_dom"/>
</dbReference>
<dbReference type="InterPro" id="IPR039974">
    <property type="entry name" value="Splicing_factor_SLU7"/>
</dbReference>
<dbReference type="PANTHER" id="PTHR12942:SF6">
    <property type="entry name" value="PRE-MRNA-SPLICING FACTOR SLU7-A"/>
    <property type="match status" value="1"/>
</dbReference>
<dbReference type="PANTHER" id="PTHR12942">
    <property type="entry name" value="STEP II SPLICING FACTOR SLU7"/>
    <property type="match status" value="1"/>
</dbReference>
<dbReference type="Pfam" id="PF11708">
    <property type="entry name" value="Slu7"/>
    <property type="match status" value="1"/>
</dbReference>
<feature type="chain" id="PRO_0000289203" description="Pre-mRNA-splicing factor SLU7-A">
    <location>
        <begin position="1"/>
        <end position="535"/>
    </location>
</feature>
<feature type="zinc finger region" description="CCHC-type" evidence="2">
    <location>
        <begin position="96"/>
        <end position="109"/>
    </location>
</feature>
<feature type="region of interest" description="Disordered" evidence="4">
    <location>
        <begin position="21"/>
        <end position="44"/>
    </location>
</feature>
<feature type="region of interest" description="Disordered" evidence="4">
    <location>
        <begin position="176"/>
        <end position="204"/>
    </location>
</feature>
<feature type="region of interest" description="Disordered" evidence="4">
    <location>
        <begin position="489"/>
        <end position="508"/>
    </location>
</feature>
<feature type="short sequence motif" description="Nuclear localization signal" evidence="3">
    <location>
        <begin position="486"/>
        <end position="493"/>
    </location>
</feature>
<feature type="compositionally biased region" description="Basic and acidic residues" evidence="4">
    <location>
        <begin position="176"/>
        <end position="190"/>
    </location>
</feature>
<feature type="compositionally biased region" description="Acidic residues" evidence="4">
    <location>
        <begin position="191"/>
        <end position="203"/>
    </location>
</feature>
<feature type="compositionally biased region" description="Basic and acidic residues" evidence="4">
    <location>
        <begin position="489"/>
        <end position="501"/>
    </location>
</feature>
<feature type="modified residue" description="Phosphoserine" evidence="11">
    <location>
        <position position="193"/>
    </location>
</feature>
<feature type="sequence conflict" description="In Ref. 1; AAF23844." evidence="7" ref="1">
    <original>A</original>
    <variation>T</variation>
    <location>
        <position position="101"/>
    </location>
</feature>
<gene>
    <name evidence="6" type="primary">SMP1</name>
    <name evidence="8" type="ordered locus">At1g65660</name>
    <name evidence="10" type="ORF">F1E22.4</name>
    <name evidence="9" type="ORF">F5I14.19</name>
</gene>
<evidence type="ECO:0000250" key="1">
    <source>
        <dbReference type="UniProtKB" id="O95391"/>
    </source>
</evidence>
<evidence type="ECO:0000255" key="2">
    <source>
        <dbReference type="PROSITE-ProRule" id="PRU00047"/>
    </source>
</evidence>
<evidence type="ECO:0000255" key="3">
    <source>
        <dbReference type="PROSITE-ProRule" id="PRU00768"/>
    </source>
</evidence>
<evidence type="ECO:0000256" key="4">
    <source>
        <dbReference type="SAM" id="MobiDB-lite"/>
    </source>
</evidence>
<evidence type="ECO:0000269" key="5">
    <source>
    </source>
</evidence>
<evidence type="ECO:0000303" key="6">
    <source>
    </source>
</evidence>
<evidence type="ECO:0000305" key="7"/>
<evidence type="ECO:0000312" key="8">
    <source>
        <dbReference type="Araport" id="AT1G65660"/>
    </source>
</evidence>
<evidence type="ECO:0000312" key="9">
    <source>
        <dbReference type="EMBL" id="AAB60915.1"/>
    </source>
</evidence>
<evidence type="ECO:0000312" key="10">
    <source>
        <dbReference type="EMBL" id="AAF23844.1"/>
    </source>
</evidence>
<evidence type="ECO:0007744" key="11">
    <source>
    </source>
</evidence>
<accession>Q9SHY8</accession>
<accession>O04483</accession>
<accession>Q84WT4</accession>
<reference key="1">
    <citation type="journal article" date="2000" name="Nature">
        <title>Sequence and analysis of chromosome 1 of the plant Arabidopsis thaliana.</title>
        <authorList>
            <person name="Theologis A."/>
            <person name="Ecker J.R."/>
            <person name="Palm C.J."/>
            <person name="Federspiel N.A."/>
            <person name="Kaul S."/>
            <person name="White O."/>
            <person name="Alonso J."/>
            <person name="Altafi H."/>
            <person name="Araujo R."/>
            <person name="Bowman C.L."/>
            <person name="Brooks S.Y."/>
            <person name="Buehler E."/>
            <person name="Chan A."/>
            <person name="Chao Q."/>
            <person name="Chen H."/>
            <person name="Cheuk R.F."/>
            <person name="Chin C.W."/>
            <person name="Chung M.K."/>
            <person name="Conn L."/>
            <person name="Conway A.B."/>
            <person name="Conway A.R."/>
            <person name="Creasy T.H."/>
            <person name="Dewar K."/>
            <person name="Dunn P."/>
            <person name="Etgu P."/>
            <person name="Feldblyum T.V."/>
            <person name="Feng J.-D."/>
            <person name="Fong B."/>
            <person name="Fujii C.Y."/>
            <person name="Gill J.E."/>
            <person name="Goldsmith A.D."/>
            <person name="Haas B."/>
            <person name="Hansen N.F."/>
            <person name="Hughes B."/>
            <person name="Huizar L."/>
            <person name="Hunter J.L."/>
            <person name="Jenkins J."/>
            <person name="Johnson-Hopson C."/>
            <person name="Khan S."/>
            <person name="Khaykin E."/>
            <person name="Kim C.J."/>
            <person name="Koo H.L."/>
            <person name="Kremenetskaia I."/>
            <person name="Kurtz D.B."/>
            <person name="Kwan A."/>
            <person name="Lam B."/>
            <person name="Langin-Hooper S."/>
            <person name="Lee A."/>
            <person name="Lee J.M."/>
            <person name="Lenz C.A."/>
            <person name="Li J.H."/>
            <person name="Li Y.-P."/>
            <person name="Lin X."/>
            <person name="Liu S.X."/>
            <person name="Liu Z.A."/>
            <person name="Luros J.S."/>
            <person name="Maiti R."/>
            <person name="Marziali A."/>
            <person name="Militscher J."/>
            <person name="Miranda M."/>
            <person name="Nguyen M."/>
            <person name="Nierman W.C."/>
            <person name="Osborne B.I."/>
            <person name="Pai G."/>
            <person name="Peterson J."/>
            <person name="Pham P.K."/>
            <person name="Rizzo M."/>
            <person name="Rooney T."/>
            <person name="Rowley D."/>
            <person name="Sakano H."/>
            <person name="Salzberg S.L."/>
            <person name="Schwartz J.R."/>
            <person name="Shinn P."/>
            <person name="Southwick A.M."/>
            <person name="Sun H."/>
            <person name="Tallon L.J."/>
            <person name="Tambunga G."/>
            <person name="Toriumi M.J."/>
            <person name="Town C.D."/>
            <person name="Utterback T."/>
            <person name="Van Aken S."/>
            <person name="Vaysberg M."/>
            <person name="Vysotskaia V.S."/>
            <person name="Walker M."/>
            <person name="Wu D."/>
            <person name="Yu G."/>
            <person name="Fraser C.M."/>
            <person name="Venter J.C."/>
            <person name="Davis R.W."/>
        </authorList>
    </citation>
    <scope>NUCLEOTIDE SEQUENCE [LARGE SCALE GENOMIC DNA]</scope>
    <source>
        <strain>cv. Columbia</strain>
    </source>
</reference>
<reference key="2">
    <citation type="journal article" date="2017" name="Plant J.">
        <title>Araport11: a complete reannotation of the Arabidopsis thaliana reference genome.</title>
        <authorList>
            <person name="Cheng C.Y."/>
            <person name="Krishnakumar V."/>
            <person name="Chan A.P."/>
            <person name="Thibaud-Nissen F."/>
            <person name="Schobel S."/>
            <person name="Town C.D."/>
        </authorList>
    </citation>
    <scope>GENOME REANNOTATION</scope>
    <source>
        <strain>cv. Columbia</strain>
    </source>
</reference>
<reference key="3">
    <citation type="journal article" date="2003" name="Science">
        <title>Empirical analysis of transcriptional activity in the Arabidopsis genome.</title>
        <authorList>
            <person name="Yamada K."/>
            <person name="Lim J."/>
            <person name="Dale J.M."/>
            <person name="Chen H."/>
            <person name="Shinn P."/>
            <person name="Palm C.J."/>
            <person name="Southwick A.M."/>
            <person name="Wu H.C."/>
            <person name="Kim C.J."/>
            <person name="Nguyen M."/>
            <person name="Pham P.K."/>
            <person name="Cheuk R.F."/>
            <person name="Karlin-Newmann G."/>
            <person name="Liu S.X."/>
            <person name="Lam B."/>
            <person name="Sakano H."/>
            <person name="Wu T."/>
            <person name="Yu G."/>
            <person name="Miranda M."/>
            <person name="Quach H.L."/>
            <person name="Tripp M."/>
            <person name="Chang C.H."/>
            <person name="Lee J.M."/>
            <person name="Toriumi M.J."/>
            <person name="Chan M.M."/>
            <person name="Tang C.C."/>
            <person name="Onodera C.S."/>
            <person name="Deng J.M."/>
            <person name="Akiyama K."/>
            <person name="Ansari Y."/>
            <person name="Arakawa T."/>
            <person name="Banh J."/>
            <person name="Banno F."/>
            <person name="Bowser L."/>
            <person name="Brooks S.Y."/>
            <person name="Carninci P."/>
            <person name="Chao Q."/>
            <person name="Choy N."/>
            <person name="Enju A."/>
            <person name="Goldsmith A.D."/>
            <person name="Gurjal M."/>
            <person name="Hansen N.F."/>
            <person name="Hayashizaki Y."/>
            <person name="Johnson-Hopson C."/>
            <person name="Hsuan V.W."/>
            <person name="Iida K."/>
            <person name="Karnes M."/>
            <person name="Khan S."/>
            <person name="Koesema E."/>
            <person name="Ishida J."/>
            <person name="Jiang P.X."/>
            <person name="Jones T."/>
            <person name="Kawai J."/>
            <person name="Kamiya A."/>
            <person name="Meyers C."/>
            <person name="Nakajima M."/>
            <person name="Narusaka M."/>
            <person name="Seki M."/>
            <person name="Sakurai T."/>
            <person name="Satou M."/>
            <person name="Tamse R."/>
            <person name="Vaysberg M."/>
            <person name="Wallender E.K."/>
            <person name="Wong C."/>
            <person name="Yamamura Y."/>
            <person name="Yuan S."/>
            <person name="Shinozaki K."/>
            <person name="Davis R.W."/>
            <person name="Theologis A."/>
            <person name="Ecker J.R."/>
        </authorList>
    </citation>
    <scope>NUCLEOTIDE SEQUENCE [LARGE SCALE MRNA]</scope>
    <source>
        <strain>cv. Columbia</strain>
    </source>
</reference>
<reference key="4">
    <citation type="journal article" date="2005" name="Plant Cell">
        <title>The recessive epigenetic swellmap mutation affects the expression of two step II splicing factors required for the transcription of the cell proliferation gene STRUWWELPETER and for the timing of cell cycle arrest in the Arabidopsis leaf.</title>
        <authorList>
            <person name="Clay N.K."/>
            <person name="Nelson T."/>
        </authorList>
    </citation>
    <scope>FUNCTION</scope>
    <scope>DISRUPTION PHENOTYPE</scope>
    <scope>TISSUE SPECIFICITY</scope>
    <scope>DEVELOPMENTAL STAGE</scope>
    <source>
        <strain>cv. Columbia</strain>
        <strain>cv. Landsberg erecta</strain>
    </source>
</reference>
<reference key="5">
    <citation type="journal article" date="2009" name="Plant Physiol.">
        <title>Large-scale Arabidopsis phosphoproteome profiling reveals novel chloroplast kinase substrates and phosphorylation networks.</title>
        <authorList>
            <person name="Reiland S."/>
            <person name="Messerli G."/>
            <person name="Baerenfaller K."/>
            <person name="Gerrits B."/>
            <person name="Endler A."/>
            <person name="Grossmann J."/>
            <person name="Gruissem W."/>
            <person name="Baginsky S."/>
        </authorList>
    </citation>
    <scope>PHOSPHORYLATION [LARGE SCALE ANALYSIS] AT SER-193</scope>
    <scope>IDENTIFICATION BY MASS SPECTROMETRY [LARGE SCALE ANALYSIS]</scope>
</reference>
<sequence length="535" mass="61978">MATASVAFKSREDHRKQIELEEARKAGLAPAEVDEDGKEINPHIPQYMSSAPWYLNSEKPSLKHQRKWKSDPNYTKSWYDRGAKIFQAEKYRKGACQNCGAMTHTAKACMDRPRKIGAKYTNMNIAPDEKIESFELDYDGKRDRWNGYDPSTYHRVIDLYEAKEDARKKYLKEQQLKKLEEKNNNEKGDDANSDGEEDEDDLRVDEAKVDESRQMDFAKVEKRVRTTGGGSTGTVRNLRIREDTAKYLLNLDVNSAHYDPKTRSMREDPLPDADPNDKFYLGDNQYRNSGQALEFKQLNIHSWEAFDKGQDMHMQAAPSQAELLYKSFQVAKEKLKSQTKDTIMDKYGNAATEDEIPMELLLGQSERQVEYDRAGRIIKGQEVILPKSKYEEDVHANNHTSVWGSYWKDHQWGYKCCQQIIRNSYCTGSAGIEAAEAALDLMKANIARKEATEESPKKVEEKRMASWGTDIPEDLELNEEALANALKKEDLSRREEKDERKRKYNVKYNNDVTPEEMEAYRMKRVHHEDPMKDFL</sequence>
<protein>
    <recommendedName>
        <fullName>Pre-mRNA-splicing factor SLU7-A</fullName>
    </recommendedName>
    <alternativeName>
        <fullName evidence="6">Protein SWELLMAP 1</fullName>
    </alternativeName>
</protein>
<name>SLU7A_ARATH</name>
<organism>
    <name type="scientific">Arabidopsis thaliana</name>
    <name type="common">Mouse-ear cress</name>
    <dbReference type="NCBI Taxonomy" id="3702"/>
    <lineage>
        <taxon>Eukaryota</taxon>
        <taxon>Viridiplantae</taxon>
        <taxon>Streptophyta</taxon>
        <taxon>Embryophyta</taxon>
        <taxon>Tracheophyta</taxon>
        <taxon>Spermatophyta</taxon>
        <taxon>Magnoliopsida</taxon>
        <taxon>eudicotyledons</taxon>
        <taxon>Gunneridae</taxon>
        <taxon>Pentapetalae</taxon>
        <taxon>rosids</taxon>
        <taxon>malvids</taxon>
        <taxon>Brassicales</taxon>
        <taxon>Brassicaceae</taxon>
        <taxon>Camelineae</taxon>
        <taxon>Arabidopsis</taxon>
    </lineage>
</organism>
<keyword id="KW-0479">Metal-binding</keyword>
<keyword id="KW-0507">mRNA processing</keyword>
<keyword id="KW-0508">mRNA splicing</keyword>
<keyword id="KW-0539">Nucleus</keyword>
<keyword id="KW-0597">Phosphoprotein</keyword>
<keyword id="KW-1185">Reference proteome</keyword>
<keyword id="KW-0747">Spliceosome</keyword>
<keyword id="KW-0862">Zinc</keyword>
<keyword id="KW-0863">Zinc-finger</keyword>
<proteinExistence type="evidence at protein level"/>
<comment type="function">
    <text evidence="1 5">Participates in the second catalytic step of pre-mRNA splicing, when the free hydroxyl group of exon I attacks the 3'-splice site to generate spliced mRNA and the excised lariat intron (By similarity). Together with SMP2, involved in the timing of cell cycle arrest during leaf development, in a STRUWWELPETER (SWP) dependent manner; promotes cell proliferation in developing organs (PubMed:15937226).</text>
</comment>
<comment type="subcellular location">
    <subcellularLocation>
        <location evidence="3">Nucleus</location>
    </subcellularLocation>
</comment>
<comment type="tissue specificity">
    <text evidence="5">Mainly expressed in tissues undergoing cell proliferation, particularly in lateral organs.</text>
</comment>
<comment type="developmental stage">
    <text evidence="5">Expressed throughout early globular-staged embryos and accumulates in the cotyledon primordia of heart-staged embryos (PubMed:15937226). Observed through embryogenesis until the bent cotyledon stage with an increased expression in procambial cells (PubMed:15937226). After germination, present throughout leaf primordia but not in the shoot apical meristem (SAM) (PubMed:15937226). In mature leaves, turned off in a tip-to-base manner (PubMed:15937226). Also detected in lateral root primordia (PubMed:15937226).</text>
</comment>
<comment type="disruption phenotype">
    <text evidence="5">Reduced organ size due to lower cell number and reduced fertility (PubMed:15937226). Cell proliferation is arrested precociously in organ primordia (PubMed:15937226). Altered expression of splicing factors required for the transcription of the cell proliferation gene STRUWWELPETER (SWP) and for the timing of cell cycle arrest in leaves (PubMed:15937226). Double mutants smp1-1 smp2-1 are not viable at the gametophytic and/or embryo stage (PubMed:15937226).</text>
</comment>
<comment type="similarity">
    <text evidence="7">Belongs to the SLU7 family.</text>
</comment>
<comment type="sequence caution" evidence="7">
    <conflict type="erroneous gene model prediction">
        <sequence resource="EMBL-CDS" id="AAB60915"/>
    </conflict>
</comment>
<comment type="sequence caution" evidence="7">
    <conflict type="erroneous gene model prediction">
        <sequence resource="EMBL-CDS" id="AAF23844"/>
    </conflict>
</comment>